<keyword id="KW-0963">Cytoplasm</keyword>
<keyword id="KW-1185">Reference proteome</keyword>
<evidence type="ECO:0000255" key="1">
    <source>
        <dbReference type="HAMAP-Rule" id="MF_01103"/>
    </source>
</evidence>
<evidence type="ECO:0000256" key="2">
    <source>
        <dbReference type="SAM" id="MobiDB-lite"/>
    </source>
</evidence>
<sequence>MDPKKIARINELAKKKKTEGLTPEEKVEQAKLREEYIEGYRRAVRHHIEGIKIVDEEGNDVTPEKLRQVQREKGLHGRSLDDPNS</sequence>
<accession>Q04JM9</accession>
<organism>
    <name type="scientific">Streptococcus pneumoniae serotype 2 (strain D39 / NCTC 7466)</name>
    <dbReference type="NCBI Taxonomy" id="373153"/>
    <lineage>
        <taxon>Bacteria</taxon>
        <taxon>Bacillati</taxon>
        <taxon>Bacillota</taxon>
        <taxon>Bacilli</taxon>
        <taxon>Lactobacillales</taxon>
        <taxon>Streptococcaceae</taxon>
        <taxon>Streptococcus</taxon>
    </lineage>
</organism>
<proteinExistence type="inferred from homology"/>
<reference key="1">
    <citation type="journal article" date="2007" name="J. Bacteriol.">
        <title>Genome sequence of Avery's virulent serotype 2 strain D39 of Streptococcus pneumoniae and comparison with that of unencapsulated laboratory strain R6.</title>
        <authorList>
            <person name="Lanie J.A."/>
            <person name="Ng W.-L."/>
            <person name="Kazmierczak K.M."/>
            <person name="Andrzejewski T.M."/>
            <person name="Davidsen T.M."/>
            <person name="Wayne K.J."/>
            <person name="Tettelin H."/>
            <person name="Glass J.I."/>
            <person name="Winkler M.E."/>
        </authorList>
    </citation>
    <scope>NUCLEOTIDE SEQUENCE [LARGE SCALE GENOMIC DNA]</scope>
    <source>
        <strain>D39 / NCTC 7466</strain>
    </source>
</reference>
<dbReference type="EMBL" id="CP000410">
    <property type="protein sequence ID" value="ABJ55404.1"/>
    <property type="molecule type" value="Genomic_DNA"/>
</dbReference>
<dbReference type="RefSeq" id="WP_000371287.1">
    <property type="nucleotide sequence ID" value="NZ_JAMLJR010000005.1"/>
</dbReference>
<dbReference type="SMR" id="Q04JM9"/>
<dbReference type="PaxDb" id="373153-SPD_1303"/>
<dbReference type="KEGG" id="spd:SPD_1303"/>
<dbReference type="eggNOG" id="COG4224">
    <property type="taxonomic scope" value="Bacteria"/>
</dbReference>
<dbReference type="HOGENOM" id="CLU_173137_0_2_9"/>
<dbReference type="BioCyc" id="SPNE373153:G1G6V-1405-MONOMER"/>
<dbReference type="Proteomes" id="UP000001452">
    <property type="component" value="Chromosome"/>
</dbReference>
<dbReference type="GO" id="GO:0005737">
    <property type="term" value="C:cytoplasm"/>
    <property type="evidence" value="ECO:0007669"/>
    <property type="project" value="UniProtKB-SubCell"/>
</dbReference>
<dbReference type="Gene3D" id="1.10.287.540">
    <property type="entry name" value="Helix hairpin bin"/>
    <property type="match status" value="1"/>
</dbReference>
<dbReference type="HAMAP" id="MF_01103">
    <property type="entry name" value="UPF0291"/>
    <property type="match status" value="1"/>
</dbReference>
<dbReference type="InterPro" id="IPR009242">
    <property type="entry name" value="DUF896"/>
</dbReference>
<dbReference type="NCBIfam" id="NF002711">
    <property type="entry name" value="PRK02539.1"/>
    <property type="match status" value="1"/>
</dbReference>
<dbReference type="PANTHER" id="PTHR37300">
    <property type="entry name" value="UPF0291 PROTEIN CBO2609/CLC_2481"/>
    <property type="match status" value="1"/>
</dbReference>
<dbReference type="PANTHER" id="PTHR37300:SF1">
    <property type="entry name" value="UPF0291 PROTEIN YNZC"/>
    <property type="match status" value="1"/>
</dbReference>
<dbReference type="Pfam" id="PF05979">
    <property type="entry name" value="DUF896"/>
    <property type="match status" value="1"/>
</dbReference>
<dbReference type="SUPFAM" id="SSF158221">
    <property type="entry name" value="YnzC-like"/>
    <property type="match status" value="1"/>
</dbReference>
<gene>
    <name type="ordered locus">SPD_1303</name>
</gene>
<comment type="subcellular location">
    <subcellularLocation>
        <location evidence="1">Cytoplasm</location>
    </subcellularLocation>
</comment>
<comment type="similarity">
    <text evidence="1">Belongs to the UPF0291 family.</text>
</comment>
<protein>
    <recommendedName>
        <fullName evidence="1">UPF0291 protein SPD_1303</fullName>
    </recommendedName>
</protein>
<feature type="chain" id="PRO_1000065029" description="UPF0291 protein SPD_1303">
    <location>
        <begin position="1"/>
        <end position="85"/>
    </location>
</feature>
<feature type="region of interest" description="Disordered" evidence="2">
    <location>
        <begin position="62"/>
        <end position="85"/>
    </location>
</feature>
<name>Y1303_STRP2</name>